<accession>Q5PAF7</accession>
<keyword id="KW-0963">Cytoplasm</keyword>
<keyword id="KW-0251">Elongation factor</keyword>
<keyword id="KW-0648">Protein biosynthesis</keyword>
<evidence type="ECO:0000255" key="1">
    <source>
        <dbReference type="HAMAP-Rule" id="MF_00050"/>
    </source>
</evidence>
<sequence>MKVGVEAIRELRQITGAGLGDCKEALETCSGDMEKAKVYLREKGLSKAYKKSHRDAADGLVAVRVEGDKGAILKLGSETDFVARNEKFRSLAAELVSSLLKHGAEDLSSFSASPYDGGSGVSVADEVVNAAAVLGEHVVLSGIGFLELGGPGVIGSYIHGAVGEGIGRAGALVALEATTAKTEALLEFARQLAMHIVAAKPESVSVETLSNDLVEREREIVAKQVEALGKPESVASKIVDGRMQKFFEDMVLLEQTFIMDGSTKIRDLLHNKGQDLGCEVRIVAYRLFSVG</sequence>
<proteinExistence type="inferred from homology"/>
<comment type="function">
    <text evidence="1">Associates with the EF-Tu.GDP complex and induces the exchange of GDP to GTP. It remains bound to the aminoacyl-tRNA.EF-Tu.GTP complex up to the GTP hydrolysis stage on the ribosome.</text>
</comment>
<comment type="subcellular location">
    <subcellularLocation>
        <location evidence="1">Cytoplasm</location>
    </subcellularLocation>
</comment>
<comment type="similarity">
    <text evidence="1">Belongs to the EF-Ts family.</text>
</comment>
<reference key="1">
    <citation type="journal article" date="2005" name="Proc. Natl. Acad. Sci. U.S.A.">
        <title>Complete genome sequencing of Anaplasma marginale reveals that the surface is skewed to two superfamilies of outer membrane proteins.</title>
        <authorList>
            <person name="Brayton K.A."/>
            <person name="Kappmeyer L.S."/>
            <person name="Herndon D.R."/>
            <person name="Dark M.J."/>
            <person name="Tibbals D.L."/>
            <person name="Palmer G.H."/>
            <person name="McGuire T.C."/>
            <person name="Knowles D.P. Jr."/>
        </authorList>
    </citation>
    <scope>NUCLEOTIDE SEQUENCE [LARGE SCALE GENOMIC DNA]</scope>
    <source>
        <strain>St. Maries</strain>
    </source>
</reference>
<gene>
    <name evidence="1" type="primary">tsf</name>
    <name type="ordered locus">AM791</name>
</gene>
<organism>
    <name type="scientific">Anaplasma marginale (strain St. Maries)</name>
    <dbReference type="NCBI Taxonomy" id="234826"/>
    <lineage>
        <taxon>Bacteria</taxon>
        <taxon>Pseudomonadati</taxon>
        <taxon>Pseudomonadota</taxon>
        <taxon>Alphaproteobacteria</taxon>
        <taxon>Rickettsiales</taxon>
        <taxon>Anaplasmataceae</taxon>
        <taxon>Anaplasma</taxon>
    </lineage>
</organism>
<protein>
    <recommendedName>
        <fullName evidence="1">Elongation factor Ts</fullName>
        <shortName evidence="1">EF-Ts</shortName>
    </recommendedName>
</protein>
<dbReference type="EMBL" id="CP000030">
    <property type="protein sequence ID" value="AAV86723.1"/>
    <property type="molecule type" value="Genomic_DNA"/>
</dbReference>
<dbReference type="RefSeq" id="WP_011114433.1">
    <property type="nucleotide sequence ID" value="NZ_AFMU01000051.1"/>
</dbReference>
<dbReference type="SMR" id="Q5PAF7"/>
<dbReference type="KEGG" id="ama:AM791"/>
<dbReference type="HOGENOM" id="CLU_047155_0_2_5"/>
<dbReference type="GO" id="GO:0005737">
    <property type="term" value="C:cytoplasm"/>
    <property type="evidence" value="ECO:0007669"/>
    <property type="project" value="UniProtKB-SubCell"/>
</dbReference>
<dbReference type="GO" id="GO:0003746">
    <property type="term" value="F:translation elongation factor activity"/>
    <property type="evidence" value="ECO:0007669"/>
    <property type="project" value="UniProtKB-UniRule"/>
</dbReference>
<dbReference type="CDD" id="cd14275">
    <property type="entry name" value="UBA_EF-Ts"/>
    <property type="match status" value="1"/>
</dbReference>
<dbReference type="FunFam" id="1.10.286.20:FF:000001">
    <property type="entry name" value="Elongation factor Ts"/>
    <property type="match status" value="1"/>
</dbReference>
<dbReference type="FunFam" id="1.10.8.10:FF:000001">
    <property type="entry name" value="Elongation factor Ts"/>
    <property type="match status" value="1"/>
</dbReference>
<dbReference type="Gene3D" id="1.10.286.20">
    <property type="match status" value="1"/>
</dbReference>
<dbReference type="Gene3D" id="1.10.8.10">
    <property type="entry name" value="DNA helicase RuvA subunit, C-terminal domain"/>
    <property type="match status" value="1"/>
</dbReference>
<dbReference type="Gene3D" id="3.30.479.20">
    <property type="entry name" value="Elongation factor Ts, dimerisation domain"/>
    <property type="match status" value="2"/>
</dbReference>
<dbReference type="HAMAP" id="MF_00050">
    <property type="entry name" value="EF_Ts"/>
    <property type="match status" value="1"/>
</dbReference>
<dbReference type="InterPro" id="IPR036402">
    <property type="entry name" value="EF-Ts_dimer_sf"/>
</dbReference>
<dbReference type="InterPro" id="IPR001816">
    <property type="entry name" value="Transl_elong_EFTs/EF1B"/>
</dbReference>
<dbReference type="InterPro" id="IPR014039">
    <property type="entry name" value="Transl_elong_EFTs/EF1B_dimer"/>
</dbReference>
<dbReference type="InterPro" id="IPR018101">
    <property type="entry name" value="Transl_elong_Ts_CS"/>
</dbReference>
<dbReference type="InterPro" id="IPR009060">
    <property type="entry name" value="UBA-like_sf"/>
</dbReference>
<dbReference type="NCBIfam" id="TIGR00116">
    <property type="entry name" value="tsf"/>
    <property type="match status" value="1"/>
</dbReference>
<dbReference type="PANTHER" id="PTHR11741">
    <property type="entry name" value="ELONGATION FACTOR TS"/>
    <property type="match status" value="1"/>
</dbReference>
<dbReference type="PANTHER" id="PTHR11741:SF0">
    <property type="entry name" value="ELONGATION FACTOR TS, MITOCHONDRIAL"/>
    <property type="match status" value="1"/>
</dbReference>
<dbReference type="Pfam" id="PF00889">
    <property type="entry name" value="EF_TS"/>
    <property type="match status" value="1"/>
</dbReference>
<dbReference type="SUPFAM" id="SSF54713">
    <property type="entry name" value="Elongation factor Ts (EF-Ts), dimerisation domain"/>
    <property type="match status" value="2"/>
</dbReference>
<dbReference type="SUPFAM" id="SSF46934">
    <property type="entry name" value="UBA-like"/>
    <property type="match status" value="1"/>
</dbReference>
<dbReference type="PROSITE" id="PS01126">
    <property type="entry name" value="EF_TS_1"/>
    <property type="match status" value="1"/>
</dbReference>
<name>EFTS_ANAMM</name>
<feature type="chain" id="PRO_0000241459" description="Elongation factor Ts">
    <location>
        <begin position="1"/>
        <end position="291"/>
    </location>
</feature>
<feature type="region of interest" description="Involved in Mg(2+) ion dislocation from EF-Tu" evidence="1">
    <location>
        <begin position="79"/>
        <end position="82"/>
    </location>
</feature>